<dbReference type="EC" id="2.7.8.13" evidence="1"/>
<dbReference type="EMBL" id="CP000930">
    <property type="protein sequence ID" value="ABZ84613.1"/>
    <property type="molecule type" value="Genomic_DNA"/>
</dbReference>
<dbReference type="RefSeq" id="WP_012283113.1">
    <property type="nucleotide sequence ID" value="NC_010337.2"/>
</dbReference>
<dbReference type="SMR" id="B0TGB7"/>
<dbReference type="STRING" id="498761.HM1_2056"/>
<dbReference type="KEGG" id="hmo:HM1_2056"/>
<dbReference type="eggNOG" id="COG0472">
    <property type="taxonomic scope" value="Bacteria"/>
</dbReference>
<dbReference type="HOGENOM" id="CLU_023982_0_1_9"/>
<dbReference type="OrthoDB" id="9805475at2"/>
<dbReference type="UniPathway" id="UPA00219"/>
<dbReference type="Proteomes" id="UP000008550">
    <property type="component" value="Chromosome"/>
</dbReference>
<dbReference type="GO" id="GO:0005886">
    <property type="term" value="C:plasma membrane"/>
    <property type="evidence" value="ECO:0007669"/>
    <property type="project" value="UniProtKB-SubCell"/>
</dbReference>
<dbReference type="GO" id="GO:0046872">
    <property type="term" value="F:metal ion binding"/>
    <property type="evidence" value="ECO:0007669"/>
    <property type="project" value="UniProtKB-KW"/>
</dbReference>
<dbReference type="GO" id="GO:0008963">
    <property type="term" value="F:phospho-N-acetylmuramoyl-pentapeptide-transferase activity"/>
    <property type="evidence" value="ECO:0007669"/>
    <property type="project" value="UniProtKB-UniRule"/>
</dbReference>
<dbReference type="GO" id="GO:0051992">
    <property type="term" value="F:UDP-N-acetylmuramoyl-L-alanyl-D-glutamyl-meso-2,6-diaminopimelyl-D-alanyl-D-alanine:undecaprenyl-phosphate transferase activity"/>
    <property type="evidence" value="ECO:0007669"/>
    <property type="project" value="RHEA"/>
</dbReference>
<dbReference type="GO" id="GO:0051301">
    <property type="term" value="P:cell division"/>
    <property type="evidence" value="ECO:0007669"/>
    <property type="project" value="UniProtKB-KW"/>
</dbReference>
<dbReference type="GO" id="GO:0071555">
    <property type="term" value="P:cell wall organization"/>
    <property type="evidence" value="ECO:0007669"/>
    <property type="project" value="UniProtKB-KW"/>
</dbReference>
<dbReference type="GO" id="GO:0009252">
    <property type="term" value="P:peptidoglycan biosynthetic process"/>
    <property type="evidence" value="ECO:0007669"/>
    <property type="project" value="UniProtKB-UniRule"/>
</dbReference>
<dbReference type="GO" id="GO:0008360">
    <property type="term" value="P:regulation of cell shape"/>
    <property type="evidence" value="ECO:0007669"/>
    <property type="project" value="UniProtKB-KW"/>
</dbReference>
<dbReference type="CDD" id="cd06852">
    <property type="entry name" value="GT_MraY"/>
    <property type="match status" value="1"/>
</dbReference>
<dbReference type="HAMAP" id="MF_00038">
    <property type="entry name" value="MraY"/>
    <property type="match status" value="1"/>
</dbReference>
<dbReference type="InterPro" id="IPR000715">
    <property type="entry name" value="Glycosyl_transferase_4"/>
</dbReference>
<dbReference type="InterPro" id="IPR003524">
    <property type="entry name" value="PNAcMuramoyl-5peptid_Trfase"/>
</dbReference>
<dbReference type="InterPro" id="IPR018480">
    <property type="entry name" value="PNAcMuramoyl-5peptid_Trfase_CS"/>
</dbReference>
<dbReference type="NCBIfam" id="TIGR00445">
    <property type="entry name" value="mraY"/>
    <property type="match status" value="1"/>
</dbReference>
<dbReference type="PANTHER" id="PTHR22926">
    <property type="entry name" value="PHOSPHO-N-ACETYLMURAMOYL-PENTAPEPTIDE-TRANSFERASE"/>
    <property type="match status" value="1"/>
</dbReference>
<dbReference type="PANTHER" id="PTHR22926:SF5">
    <property type="entry name" value="PHOSPHO-N-ACETYLMURAMOYL-PENTAPEPTIDE-TRANSFERASE HOMOLOG"/>
    <property type="match status" value="1"/>
</dbReference>
<dbReference type="Pfam" id="PF00953">
    <property type="entry name" value="Glycos_transf_4"/>
    <property type="match status" value="1"/>
</dbReference>
<dbReference type="Pfam" id="PF10555">
    <property type="entry name" value="MraY_sig1"/>
    <property type="match status" value="1"/>
</dbReference>
<dbReference type="PROSITE" id="PS01347">
    <property type="entry name" value="MRAY_1"/>
    <property type="match status" value="1"/>
</dbReference>
<dbReference type="PROSITE" id="PS01348">
    <property type="entry name" value="MRAY_2"/>
    <property type="match status" value="1"/>
</dbReference>
<comment type="function">
    <text evidence="1">Catalyzes the initial step of the lipid cycle reactions in the biosynthesis of the cell wall peptidoglycan: transfers peptidoglycan precursor phospho-MurNAc-pentapeptide from UDP-MurNAc-pentapeptide onto the lipid carrier undecaprenyl phosphate, yielding undecaprenyl-pyrophosphoryl-MurNAc-pentapeptide, known as lipid I.</text>
</comment>
<comment type="catalytic activity">
    <reaction evidence="1">
        <text>UDP-N-acetyl-alpha-D-muramoyl-L-alanyl-gamma-D-glutamyl-meso-2,6-diaminopimeloyl-D-alanyl-D-alanine + di-trans,octa-cis-undecaprenyl phosphate = di-trans,octa-cis-undecaprenyl diphospho-N-acetyl-alpha-D-muramoyl-L-alanyl-D-glutamyl-meso-2,6-diaminopimeloyl-D-alanyl-D-alanine + UMP</text>
        <dbReference type="Rhea" id="RHEA:28386"/>
        <dbReference type="ChEBI" id="CHEBI:57865"/>
        <dbReference type="ChEBI" id="CHEBI:60392"/>
        <dbReference type="ChEBI" id="CHEBI:61386"/>
        <dbReference type="ChEBI" id="CHEBI:61387"/>
        <dbReference type="EC" id="2.7.8.13"/>
    </reaction>
</comment>
<comment type="cofactor">
    <cofactor evidence="1">
        <name>Mg(2+)</name>
        <dbReference type="ChEBI" id="CHEBI:18420"/>
    </cofactor>
</comment>
<comment type="pathway">
    <text evidence="1">Cell wall biogenesis; peptidoglycan biosynthesis.</text>
</comment>
<comment type="subcellular location">
    <subcellularLocation>
        <location evidence="1">Cell membrane</location>
        <topology evidence="1">Multi-pass membrane protein</topology>
    </subcellularLocation>
</comment>
<comment type="similarity">
    <text evidence="1">Belongs to the glycosyltransferase 4 family. MraY subfamily.</text>
</comment>
<reference key="1">
    <citation type="journal article" date="2008" name="J. Bacteriol.">
        <title>The genome of Heliobacterium modesticaldum, a phototrophic representative of the Firmicutes containing the simplest photosynthetic apparatus.</title>
        <authorList>
            <person name="Sattley W.M."/>
            <person name="Madigan M.T."/>
            <person name="Swingley W.D."/>
            <person name="Cheung P.C."/>
            <person name="Clocksin K.M."/>
            <person name="Conrad A.L."/>
            <person name="Dejesa L.C."/>
            <person name="Honchak B.M."/>
            <person name="Jung D.O."/>
            <person name="Karbach L.E."/>
            <person name="Kurdoglu A."/>
            <person name="Lahiri S."/>
            <person name="Mastrian S.D."/>
            <person name="Page L.E."/>
            <person name="Taylor H.L."/>
            <person name="Wang Z.T."/>
            <person name="Raymond J."/>
            <person name="Chen M."/>
            <person name="Blankenship R.E."/>
            <person name="Touchman J.W."/>
        </authorList>
    </citation>
    <scope>NUCLEOTIDE SEQUENCE [LARGE SCALE GENOMIC DNA]</scope>
    <source>
        <strain>ATCC 51547 / Ice1</strain>
    </source>
</reference>
<proteinExistence type="inferred from homology"/>
<feature type="chain" id="PRO_1000116518" description="Phospho-N-acetylmuramoyl-pentapeptide-transferase">
    <location>
        <begin position="1"/>
        <end position="321"/>
    </location>
</feature>
<feature type="transmembrane region" description="Helical" evidence="1">
    <location>
        <begin position="4"/>
        <end position="24"/>
    </location>
</feature>
<feature type="transmembrane region" description="Helical" evidence="1">
    <location>
        <begin position="51"/>
        <end position="71"/>
    </location>
</feature>
<feature type="transmembrane region" description="Helical" evidence="1">
    <location>
        <begin position="75"/>
        <end position="95"/>
    </location>
</feature>
<feature type="transmembrane region" description="Helical" evidence="1">
    <location>
        <begin position="109"/>
        <end position="129"/>
    </location>
</feature>
<feature type="transmembrane region" description="Helical" evidence="1">
    <location>
        <begin position="139"/>
        <end position="159"/>
    </location>
</feature>
<feature type="transmembrane region" description="Helical" evidence="1">
    <location>
        <begin position="173"/>
        <end position="193"/>
    </location>
</feature>
<feature type="transmembrane region" description="Helical" evidence="1">
    <location>
        <begin position="195"/>
        <end position="215"/>
    </location>
</feature>
<feature type="transmembrane region" description="Helical" evidence="1">
    <location>
        <begin position="222"/>
        <end position="242"/>
    </location>
</feature>
<feature type="transmembrane region" description="Helical" evidence="1">
    <location>
        <begin position="247"/>
        <end position="267"/>
    </location>
</feature>
<feature type="transmembrane region" description="Helical" evidence="1">
    <location>
        <begin position="297"/>
        <end position="317"/>
    </location>
</feature>
<evidence type="ECO:0000255" key="1">
    <source>
        <dbReference type="HAMAP-Rule" id="MF_00038"/>
    </source>
</evidence>
<accession>B0TGB7</accession>
<organism>
    <name type="scientific">Heliobacterium modesticaldum (strain ATCC 51547 / Ice1)</name>
    <dbReference type="NCBI Taxonomy" id="498761"/>
    <lineage>
        <taxon>Bacteria</taxon>
        <taxon>Bacillati</taxon>
        <taxon>Bacillota</taxon>
        <taxon>Clostridia</taxon>
        <taxon>Eubacteriales</taxon>
        <taxon>Heliobacteriaceae</taxon>
        <taxon>Heliomicrobium</taxon>
    </lineage>
</organism>
<keyword id="KW-0131">Cell cycle</keyword>
<keyword id="KW-0132">Cell division</keyword>
<keyword id="KW-1003">Cell membrane</keyword>
<keyword id="KW-0133">Cell shape</keyword>
<keyword id="KW-0961">Cell wall biogenesis/degradation</keyword>
<keyword id="KW-0460">Magnesium</keyword>
<keyword id="KW-0472">Membrane</keyword>
<keyword id="KW-0479">Metal-binding</keyword>
<keyword id="KW-0573">Peptidoglycan synthesis</keyword>
<keyword id="KW-1185">Reference proteome</keyword>
<keyword id="KW-0808">Transferase</keyword>
<keyword id="KW-0812">Transmembrane</keyword>
<keyword id="KW-1133">Transmembrane helix</keyword>
<gene>
    <name evidence="1" type="primary">mraY</name>
    <name type="ordered locus">Helmi_19880</name>
    <name type="ORF">HM1_2056</name>
</gene>
<protein>
    <recommendedName>
        <fullName evidence="1">Phospho-N-acetylmuramoyl-pentapeptide-transferase</fullName>
        <ecNumber evidence="1">2.7.8.13</ecNumber>
    </recommendedName>
    <alternativeName>
        <fullName evidence="1">UDP-MurNAc-pentapeptide phosphotransferase</fullName>
    </alternativeName>
</protein>
<sequence length="321" mass="34389">MQKMVWAFIVASAVGLLIGPWLIPYLRRLKFGQSIREEGPKGHQRKAGTPTMGGLLFLIAVPMAVLVTVGFTPQSGVLLLGLLGFGLIGFLDDYIKVVKKRNLGLRAWQKFTGQLILSLILIYGVVYGIDRGTSLYLPGFEVWWDAGALYYPLALLLIVGTTNAVNLADGLDGLAAGMTFWVALAFAAIASAGTSDVTAAFAAALAGGCIGFLFFNHHPARMFMGDTGSLALGGAVATLALLTRTELILPVLGAVFVAETLSVILQVASFKLTGKRIFRMSPLHHHFELGGWPETTVVYTFWAASLISAFLGVLLAMPIRF</sequence>
<name>MRAY_HELMI</name>